<name>RS3_STRGC</name>
<proteinExistence type="inferred from homology"/>
<keyword id="KW-1185">Reference proteome</keyword>
<keyword id="KW-0687">Ribonucleoprotein</keyword>
<keyword id="KW-0689">Ribosomal protein</keyword>
<keyword id="KW-0694">RNA-binding</keyword>
<keyword id="KW-0699">rRNA-binding</keyword>
<evidence type="ECO:0000255" key="1">
    <source>
        <dbReference type="HAMAP-Rule" id="MF_01309"/>
    </source>
</evidence>
<evidence type="ECO:0000305" key="2"/>
<feature type="chain" id="PRO_0000323308" description="Small ribosomal subunit protein uS3">
    <location>
        <begin position="1"/>
        <end position="217"/>
    </location>
</feature>
<feature type="domain" description="KH type-2" evidence="1">
    <location>
        <begin position="38"/>
        <end position="106"/>
    </location>
</feature>
<dbReference type="EMBL" id="CP000725">
    <property type="protein sequence ID" value="ABV10740.1"/>
    <property type="molecule type" value="Genomic_DNA"/>
</dbReference>
<dbReference type="RefSeq" id="WP_008809905.1">
    <property type="nucleotide sequence ID" value="NC_009785.1"/>
</dbReference>
<dbReference type="SMR" id="A8AZL9"/>
<dbReference type="STRING" id="467705.SGO_1979"/>
<dbReference type="GeneID" id="93786848"/>
<dbReference type="KEGG" id="sgo:SGO_1979"/>
<dbReference type="eggNOG" id="COG0092">
    <property type="taxonomic scope" value="Bacteria"/>
</dbReference>
<dbReference type="HOGENOM" id="CLU_058591_0_2_9"/>
<dbReference type="Proteomes" id="UP000001131">
    <property type="component" value="Chromosome"/>
</dbReference>
<dbReference type="GO" id="GO:0022627">
    <property type="term" value="C:cytosolic small ribosomal subunit"/>
    <property type="evidence" value="ECO:0007669"/>
    <property type="project" value="TreeGrafter"/>
</dbReference>
<dbReference type="GO" id="GO:0003729">
    <property type="term" value="F:mRNA binding"/>
    <property type="evidence" value="ECO:0007669"/>
    <property type="project" value="UniProtKB-UniRule"/>
</dbReference>
<dbReference type="GO" id="GO:0019843">
    <property type="term" value="F:rRNA binding"/>
    <property type="evidence" value="ECO:0007669"/>
    <property type="project" value="UniProtKB-UniRule"/>
</dbReference>
<dbReference type="GO" id="GO:0003735">
    <property type="term" value="F:structural constituent of ribosome"/>
    <property type="evidence" value="ECO:0007669"/>
    <property type="project" value="InterPro"/>
</dbReference>
<dbReference type="GO" id="GO:0006412">
    <property type="term" value="P:translation"/>
    <property type="evidence" value="ECO:0007669"/>
    <property type="project" value="UniProtKB-UniRule"/>
</dbReference>
<dbReference type="CDD" id="cd02412">
    <property type="entry name" value="KH-II_30S_S3"/>
    <property type="match status" value="1"/>
</dbReference>
<dbReference type="FunFam" id="3.30.1140.32:FF:000001">
    <property type="entry name" value="30S ribosomal protein S3"/>
    <property type="match status" value="1"/>
</dbReference>
<dbReference type="FunFam" id="3.30.300.20:FF:000001">
    <property type="entry name" value="30S ribosomal protein S3"/>
    <property type="match status" value="1"/>
</dbReference>
<dbReference type="Gene3D" id="3.30.300.20">
    <property type="match status" value="1"/>
</dbReference>
<dbReference type="Gene3D" id="3.30.1140.32">
    <property type="entry name" value="Ribosomal protein S3, C-terminal domain"/>
    <property type="match status" value="1"/>
</dbReference>
<dbReference type="HAMAP" id="MF_01309_B">
    <property type="entry name" value="Ribosomal_uS3_B"/>
    <property type="match status" value="1"/>
</dbReference>
<dbReference type="InterPro" id="IPR004087">
    <property type="entry name" value="KH_dom"/>
</dbReference>
<dbReference type="InterPro" id="IPR015946">
    <property type="entry name" value="KH_dom-like_a/b"/>
</dbReference>
<dbReference type="InterPro" id="IPR004044">
    <property type="entry name" value="KH_dom_type_2"/>
</dbReference>
<dbReference type="InterPro" id="IPR009019">
    <property type="entry name" value="KH_sf_prok-type"/>
</dbReference>
<dbReference type="InterPro" id="IPR036419">
    <property type="entry name" value="Ribosomal_S3_C_sf"/>
</dbReference>
<dbReference type="InterPro" id="IPR005704">
    <property type="entry name" value="Ribosomal_uS3_bac-typ"/>
</dbReference>
<dbReference type="InterPro" id="IPR001351">
    <property type="entry name" value="Ribosomal_uS3_C"/>
</dbReference>
<dbReference type="InterPro" id="IPR018280">
    <property type="entry name" value="Ribosomal_uS3_CS"/>
</dbReference>
<dbReference type="NCBIfam" id="TIGR01009">
    <property type="entry name" value="rpsC_bact"/>
    <property type="match status" value="1"/>
</dbReference>
<dbReference type="PANTHER" id="PTHR11760">
    <property type="entry name" value="30S/40S RIBOSOMAL PROTEIN S3"/>
    <property type="match status" value="1"/>
</dbReference>
<dbReference type="PANTHER" id="PTHR11760:SF19">
    <property type="entry name" value="SMALL RIBOSOMAL SUBUNIT PROTEIN US3C"/>
    <property type="match status" value="1"/>
</dbReference>
<dbReference type="Pfam" id="PF07650">
    <property type="entry name" value="KH_2"/>
    <property type="match status" value="1"/>
</dbReference>
<dbReference type="Pfam" id="PF00189">
    <property type="entry name" value="Ribosomal_S3_C"/>
    <property type="match status" value="1"/>
</dbReference>
<dbReference type="SMART" id="SM00322">
    <property type="entry name" value="KH"/>
    <property type="match status" value="1"/>
</dbReference>
<dbReference type="SUPFAM" id="SSF54814">
    <property type="entry name" value="Prokaryotic type KH domain (KH-domain type II)"/>
    <property type="match status" value="1"/>
</dbReference>
<dbReference type="SUPFAM" id="SSF54821">
    <property type="entry name" value="Ribosomal protein S3 C-terminal domain"/>
    <property type="match status" value="1"/>
</dbReference>
<dbReference type="PROSITE" id="PS50823">
    <property type="entry name" value="KH_TYPE_2"/>
    <property type="match status" value="1"/>
</dbReference>
<dbReference type="PROSITE" id="PS00548">
    <property type="entry name" value="RIBOSOMAL_S3"/>
    <property type="match status" value="1"/>
</dbReference>
<comment type="function">
    <text evidence="1">Binds the lower part of the 30S subunit head. Binds mRNA in the 70S ribosome, positioning it for translation.</text>
</comment>
<comment type="subunit">
    <text evidence="1">Part of the 30S ribosomal subunit. Forms a tight complex with proteins S10 and S14.</text>
</comment>
<comment type="similarity">
    <text evidence="1">Belongs to the universal ribosomal protein uS3 family.</text>
</comment>
<reference key="1">
    <citation type="journal article" date="2007" name="J. Bacteriol.">
        <title>Genome-wide transcriptional changes in Streptococcus gordonii in response to competence signaling peptide.</title>
        <authorList>
            <person name="Vickerman M.M."/>
            <person name="Iobst S."/>
            <person name="Jesionowski A.M."/>
            <person name="Gill S.R."/>
        </authorList>
    </citation>
    <scope>NUCLEOTIDE SEQUENCE [LARGE SCALE GENOMIC DNA]</scope>
    <source>
        <strain>Challis / ATCC 35105 / BCRC 15272 / CH1 / DL1 / V288</strain>
    </source>
</reference>
<organism>
    <name type="scientific">Streptococcus gordonii (strain Challis / ATCC 35105 / BCRC 15272 / CH1 / DL1 / V288)</name>
    <dbReference type="NCBI Taxonomy" id="467705"/>
    <lineage>
        <taxon>Bacteria</taxon>
        <taxon>Bacillati</taxon>
        <taxon>Bacillota</taxon>
        <taxon>Bacilli</taxon>
        <taxon>Lactobacillales</taxon>
        <taxon>Streptococcaceae</taxon>
        <taxon>Streptococcus</taxon>
    </lineage>
</organism>
<gene>
    <name evidence="1" type="primary">rpsC</name>
    <name type="ordered locus">SGO_1979</name>
</gene>
<sequence>MGQKVHPIGMRVGIIRDWDAKWYAEKEYADYLHEDLAIRKFVQKELADAAVSTIEIERAVNKVNVSLHTAKPGMVIGKGGANVDALRAKLNKLTGKQVHINIIEIKSPDLDAHLVGEGIARQLEQRVAFRRAQKQAIQRTMRAGAKGIKTQVSGRLNGADIARSEGYSEGTVPLHTLRADIDYAWEEADTTYGKLGVKVWIYRGEILPARKNTKGGK</sequence>
<accession>A8AZL9</accession>
<protein>
    <recommendedName>
        <fullName evidence="1">Small ribosomal subunit protein uS3</fullName>
    </recommendedName>
    <alternativeName>
        <fullName evidence="2">30S ribosomal protein S3</fullName>
    </alternativeName>
</protein>